<sequence>MTEKEHFFWNKLLELAKEELTQATFDYYVLDTKLIKIQDNVATILLEEVKKLFWEKNMQSFILMTGFEVYNSEIKVEYVFDEALVSETKPTLANNDFSNKREQQTPDLPTLNSDLNSKYTFDNFIQGDENRWSVAASLAVADSPGATYNPLFIYGGPGLGKTHLLNAIGNKVLHDNPQARIKYITAENFINEFVLHIRLDKMDELKLKYRHLDVLLIDDIQSLAKKSTQATQEEFFNTFNVLHDNNKQIVLTSDRNPDQLNEMEERLVTRFKWGLTVNITPPDFETRVAILTNKIMDYDYHFPPETIEYLAGQFDSNVRDLEGALKDISLVANVRQLDTITVEVAAEAIRARKIDGPKLTLIPIEDIQSEVGKFYNVTVKEIKATKRTQNIVLARQVAMYLAREMTDNSLPKIGKEFGGRDHSTVLHAYNKIKNMLAQDDSLRIEIDTIKNKIK</sequence>
<name>DNAA_STRT1</name>
<feature type="chain" id="PRO_0000114280" description="Chromosomal replication initiator protein DnaA">
    <location>
        <begin position="1"/>
        <end position="454"/>
    </location>
</feature>
<feature type="region of interest" description="Domain I, interacts with DnaA modulators" evidence="1">
    <location>
        <begin position="1"/>
        <end position="83"/>
    </location>
</feature>
<feature type="region of interest" description="Domain II" evidence="1">
    <location>
        <begin position="83"/>
        <end position="113"/>
    </location>
</feature>
<feature type="region of interest" description="Domain III, AAA+ region" evidence="1">
    <location>
        <begin position="114"/>
        <end position="332"/>
    </location>
</feature>
<feature type="region of interest" description="Domain IV, binds dsDNA" evidence="1">
    <location>
        <begin position="333"/>
        <end position="454"/>
    </location>
</feature>
<feature type="binding site" evidence="1">
    <location>
        <position position="158"/>
    </location>
    <ligand>
        <name>ATP</name>
        <dbReference type="ChEBI" id="CHEBI:30616"/>
    </ligand>
</feature>
<feature type="binding site" evidence="1">
    <location>
        <position position="160"/>
    </location>
    <ligand>
        <name>ATP</name>
        <dbReference type="ChEBI" id="CHEBI:30616"/>
    </ligand>
</feature>
<feature type="binding site" evidence="1">
    <location>
        <position position="161"/>
    </location>
    <ligand>
        <name>ATP</name>
        <dbReference type="ChEBI" id="CHEBI:30616"/>
    </ligand>
</feature>
<feature type="binding site" evidence="1">
    <location>
        <position position="162"/>
    </location>
    <ligand>
        <name>ATP</name>
        <dbReference type="ChEBI" id="CHEBI:30616"/>
    </ligand>
</feature>
<comment type="function">
    <text evidence="1">Plays an essential role in the initiation and regulation of chromosomal replication. ATP-DnaA binds to the origin of replication (oriC) to initiate formation of the DNA replication initiation complex once per cell cycle. Binds the DnaA box (a 9 base pair repeat at the origin) and separates the double-stranded (ds)DNA. Forms a right-handed helical filament on oriC DNA; dsDNA binds to the exterior of the filament while single-stranded (ss)DNA is stabiized in the filament's interior. The ATP-DnaA-oriC complex binds and stabilizes one strand of the AT-rich DNA unwinding element (DUE), permitting loading of DNA polymerase. After initiation quickly degrades to an ADP-DnaA complex that is not apt for DNA replication. Binds acidic phospholipids.</text>
</comment>
<comment type="subunit">
    <text evidence="1">Oligomerizes as a right-handed, spiral filament on DNA at oriC.</text>
</comment>
<comment type="subcellular location">
    <subcellularLocation>
        <location evidence="1">Cytoplasm</location>
    </subcellularLocation>
</comment>
<comment type="domain">
    <text evidence="1">Domain I is involved in oligomerization and binding regulators, domain II is flexibile and of varying length in different bacteria, domain III forms the AAA+ region, while domain IV binds dsDNA.</text>
</comment>
<comment type="similarity">
    <text evidence="1">Belongs to the DnaA family.</text>
</comment>
<reference key="1">
    <citation type="journal article" date="2004" name="Nat. Biotechnol.">
        <title>Complete sequence and comparative genome analysis of the dairy bacterium Streptococcus thermophilus.</title>
        <authorList>
            <person name="Bolotin A."/>
            <person name="Quinquis B."/>
            <person name="Renault P."/>
            <person name="Sorokin A."/>
            <person name="Ehrlich S.D."/>
            <person name="Kulakauskas S."/>
            <person name="Lapidus A."/>
            <person name="Goltsman E."/>
            <person name="Mazur M."/>
            <person name="Pusch G.D."/>
            <person name="Fonstein M."/>
            <person name="Overbeek R."/>
            <person name="Kyprides N."/>
            <person name="Purnelle B."/>
            <person name="Prozzi D."/>
            <person name="Ngui K."/>
            <person name="Masuy D."/>
            <person name="Hancy F."/>
            <person name="Burteau S."/>
            <person name="Boutry M."/>
            <person name="Delcour J."/>
            <person name="Goffeau A."/>
            <person name="Hols P."/>
        </authorList>
    </citation>
    <scope>NUCLEOTIDE SEQUENCE [LARGE SCALE GENOMIC DNA]</scope>
    <source>
        <strain>CNRZ 1066</strain>
    </source>
</reference>
<organism>
    <name type="scientific">Streptococcus thermophilus (strain CNRZ 1066)</name>
    <dbReference type="NCBI Taxonomy" id="299768"/>
    <lineage>
        <taxon>Bacteria</taxon>
        <taxon>Bacillati</taxon>
        <taxon>Bacillota</taxon>
        <taxon>Bacilli</taxon>
        <taxon>Lactobacillales</taxon>
        <taxon>Streptococcaceae</taxon>
        <taxon>Streptococcus</taxon>
    </lineage>
</organism>
<protein>
    <recommendedName>
        <fullName evidence="1">Chromosomal replication initiator protein DnaA</fullName>
    </recommendedName>
</protein>
<proteinExistence type="inferred from homology"/>
<dbReference type="EMBL" id="CP000024">
    <property type="protein sequence ID" value="AAV61620.1"/>
    <property type="molecule type" value="Genomic_DNA"/>
</dbReference>
<dbReference type="RefSeq" id="WP_002948584.1">
    <property type="nucleotide sequence ID" value="NC_006449.1"/>
</dbReference>
<dbReference type="SMR" id="Q5M226"/>
<dbReference type="GeneID" id="66897904"/>
<dbReference type="KEGG" id="stc:str0001"/>
<dbReference type="HOGENOM" id="CLU_026910_3_2_9"/>
<dbReference type="GO" id="GO:0005737">
    <property type="term" value="C:cytoplasm"/>
    <property type="evidence" value="ECO:0007669"/>
    <property type="project" value="UniProtKB-SubCell"/>
</dbReference>
<dbReference type="GO" id="GO:0005886">
    <property type="term" value="C:plasma membrane"/>
    <property type="evidence" value="ECO:0007669"/>
    <property type="project" value="TreeGrafter"/>
</dbReference>
<dbReference type="GO" id="GO:0005524">
    <property type="term" value="F:ATP binding"/>
    <property type="evidence" value="ECO:0007669"/>
    <property type="project" value="UniProtKB-UniRule"/>
</dbReference>
<dbReference type="GO" id="GO:0016887">
    <property type="term" value="F:ATP hydrolysis activity"/>
    <property type="evidence" value="ECO:0007669"/>
    <property type="project" value="InterPro"/>
</dbReference>
<dbReference type="GO" id="GO:0003688">
    <property type="term" value="F:DNA replication origin binding"/>
    <property type="evidence" value="ECO:0007669"/>
    <property type="project" value="UniProtKB-UniRule"/>
</dbReference>
<dbReference type="GO" id="GO:0008289">
    <property type="term" value="F:lipid binding"/>
    <property type="evidence" value="ECO:0007669"/>
    <property type="project" value="UniProtKB-KW"/>
</dbReference>
<dbReference type="GO" id="GO:0006270">
    <property type="term" value="P:DNA replication initiation"/>
    <property type="evidence" value="ECO:0007669"/>
    <property type="project" value="UniProtKB-UniRule"/>
</dbReference>
<dbReference type="GO" id="GO:0006275">
    <property type="term" value="P:regulation of DNA replication"/>
    <property type="evidence" value="ECO:0007669"/>
    <property type="project" value="UniProtKB-UniRule"/>
</dbReference>
<dbReference type="CDD" id="cd00009">
    <property type="entry name" value="AAA"/>
    <property type="match status" value="1"/>
</dbReference>
<dbReference type="CDD" id="cd06571">
    <property type="entry name" value="Bac_DnaA_C"/>
    <property type="match status" value="1"/>
</dbReference>
<dbReference type="FunFam" id="1.10.1750.10:FF:000002">
    <property type="entry name" value="Chromosomal replication initiator protein DnaA"/>
    <property type="match status" value="1"/>
</dbReference>
<dbReference type="FunFam" id="3.40.50.300:FF:000668">
    <property type="entry name" value="Chromosomal replication initiator protein DnaA"/>
    <property type="match status" value="1"/>
</dbReference>
<dbReference type="Gene3D" id="1.10.1750.10">
    <property type="match status" value="1"/>
</dbReference>
<dbReference type="Gene3D" id="1.10.8.60">
    <property type="match status" value="1"/>
</dbReference>
<dbReference type="Gene3D" id="3.30.300.180">
    <property type="match status" value="1"/>
</dbReference>
<dbReference type="Gene3D" id="3.40.50.300">
    <property type="entry name" value="P-loop containing nucleotide triphosphate hydrolases"/>
    <property type="match status" value="1"/>
</dbReference>
<dbReference type="HAMAP" id="MF_00377">
    <property type="entry name" value="DnaA_bact"/>
    <property type="match status" value="1"/>
</dbReference>
<dbReference type="InterPro" id="IPR003593">
    <property type="entry name" value="AAA+_ATPase"/>
</dbReference>
<dbReference type="InterPro" id="IPR001957">
    <property type="entry name" value="Chromosome_initiator_DnaA"/>
</dbReference>
<dbReference type="InterPro" id="IPR020591">
    <property type="entry name" value="Chromosome_initiator_DnaA-like"/>
</dbReference>
<dbReference type="InterPro" id="IPR018312">
    <property type="entry name" value="Chromosome_initiator_DnaA_CS"/>
</dbReference>
<dbReference type="InterPro" id="IPR013159">
    <property type="entry name" value="DnaA_C"/>
</dbReference>
<dbReference type="InterPro" id="IPR013317">
    <property type="entry name" value="DnaA_dom"/>
</dbReference>
<dbReference type="InterPro" id="IPR038454">
    <property type="entry name" value="DnaA_N_sf"/>
</dbReference>
<dbReference type="InterPro" id="IPR027417">
    <property type="entry name" value="P-loop_NTPase"/>
</dbReference>
<dbReference type="InterPro" id="IPR010921">
    <property type="entry name" value="Trp_repressor/repl_initiator"/>
</dbReference>
<dbReference type="NCBIfam" id="TIGR00362">
    <property type="entry name" value="DnaA"/>
    <property type="match status" value="1"/>
</dbReference>
<dbReference type="PANTHER" id="PTHR30050">
    <property type="entry name" value="CHROMOSOMAL REPLICATION INITIATOR PROTEIN DNAA"/>
    <property type="match status" value="1"/>
</dbReference>
<dbReference type="PANTHER" id="PTHR30050:SF2">
    <property type="entry name" value="CHROMOSOMAL REPLICATION INITIATOR PROTEIN DNAA"/>
    <property type="match status" value="1"/>
</dbReference>
<dbReference type="Pfam" id="PF00308">
    <property type="entry name" value="Bac_DnaA"/>
    <property type="match status" value="1"/>
</dbReference>
<dbReference type="Pfam" id="PF08299">
    <property type="entry name" value="Bac_DnaA_C"/>
    <property type="match status" value="1"/>
</dbReference>
<dbReference type="PRINTS" id="PR00051">
    <property type="entry name" value="DNAA"/>
</dbReference>
<dbReference type="SMART" id="SM00382">
    <property type="entry name" value="AAA"/>
    <property type="match status" value="1"/>
</dbReference>
<dbReference type="SMART" id="SM00760">
    <property type="entry name" value="Bac_DnaA_C"/>
    <property type="match status" value="1"/>
</dbReference>
<dbReference type="SUPFAM" id="SSF52540">
    <property type="entry name" value="P-loop containing nucleoside triphosphate hydrolases"/>
    <property type="match status" value="1"/>
</dbReference>
<dbReference type="SUPFAM" id="SSF48295">
    <property type="entry name" value="TrpR-like"/>
    <property type="match status" value="1"/>
</dbReference>
<dbReference type="PROSITE" id="PS01008">
    <property type="entry name" value="DNAA"/>
    <property type="match status" value="1"/>
</dbReference>
<keyword id="KW-0067">ATP-binding</keyword>
<keyword id="KW-0963">Cytoplasm</keyword>
<keyword id="KW-0235">DNA replication</keyword>
<keyword id="KW-0238">DNA-binding</keyword>
<keyword id="KW-0446">Lipid-binding</keyword>
<keyword id="KW-0547">Nucleotide-binding</keyword>
<evidence type="ECO:0000255" key="1">
    <source>
        <dbReference type="HAMAP-Rule" id="MF_00377"/>
    </source>
</evidence>
<gene>
    <name evidence="1" type="primary">dnaA</name>
    <name type="ordered locus">str0001</name>
</gene>
<accession>Q5M226</accession>